<proteinExistence type="inferred from homology"/>
<feature type="chain" id="PRO_0000155249" description="Thymidylate kinase">
    <location>
        <begin position="1"/>
        <end position="212"/>
    </location>
</feature>
<feature type="binding site" evidence="2">
    <location>
        <begin position="11"/>
        <end position="18"/>
    </location>
    <ligand>
        <name>ATP</name>
        <dbReference type="ChEBI" id="CHEBI:30616"/>
    </ligand>
</feature>
<accession>P57434</accession>
<organism>
    <name type="scientific">Buchnera aphidicola subsp. Acyrthosiphon pisum (strain APS)</name>
    <name type="common">Acyrthosiphon pisum symbiotic bacterium</name>
    <dbReference type="NCBI Taxonomy" id="107806"/>
    <lineage>
        <taxon>Bacteria</taxon>
        <taxon>Pseudomonadati</taxon>
        <taxon>Pseudomonadota</taxon>
        <taxon>Gammaproteobacteria</taxon>
        <taxon>Enterobacterales</taxon>
        <taxon>Erwiniaceae</taxon>
        <taxon>Buchnera</taxon>
    </lineage>
</organism>
<name>KTHY_BUCAI</name>
<dbReference type="EC" id="2.7.4.9"/>
<dbReference type="EMBL" id="BA000003">
    <property type="protein sequence ID" value="BAB13057.1"/>
    <property type="molecule type" value="Genomic_DNA"/>
</dbReference>
<dbReference type="RefSeq" id="NP_240171.1">
    <property type="nucleotide sequence ID" value="NC_002528.1"/>
</dbReference>
<dbReference type="RefSeq" id="WP_010896081.1">
    <property type="nucleotide sequence ID" value="NZ_AP036055.1"/>
</dbReference>
<dbReference type="SMR" id="P57434"/>
<dbReference type="STRING" id="563178.BUAP5A_346"/>
<dbReference type="EnsemblBacteria" id="BAB13057">
    <property type="protein sequence ID" value="BAB13057"/>
    <property type="gene ID" value="BAB13057"/>
</dbReference>
<dbReference type="KEGG" id="buc:BU353"/>
<dbReference type="PATRIC" id="fig|107806.10.peg.366"/>
<dbReference type="eggNOG" id="COG0125">
    <property type="taxonomic scope" value="Bacteria"/>
</dbReference>
<dbReference type="HOGENOM" id="CLU_049131_0_1_6"/>
<dbReference type="Proteomes" id="UP000001806">
    <property type="component" value="Chromosome"/>
</dbReference>
<dbReference type="GO" id="GO:0005829">
    <property type="term" value="C:cytosol"/>
    <property type="evidence" value="ECO:0007669"/>
    <property type="project" value="TreeGrafter"/>
</dbReference>
<dbReference type="GO" id="GO:0005524">
    <property type="term" value="F:ATP binding"/>
    <property type="evidence" value="ECO:0007669"/>
    <property type="project" value="UniProtKB-UniRule"/>
</dbReference>
<dbReference type="GO" id="GO:0004798">
    <property type="term" value="F:dTMP kinase activity"/>
    <property type="evidence" value="ECO:0007669"/>
    <property type="project" value="UniProtKB-UniRule"/>
</dbReference>
<dbReference type="GO" id="GO:0006233">
    <property type="term" value="P:dTDP biosynthetic process"/>
    <property type="evidence" value="ECO:0007669"/>
    <property type="project" value="InterPro"/>
</dbReference>
<dbReference type="GO" id="GO:0006235">
    <property type="term" value="P:dTTP biosynthetic process"/>
    <property type="evidence" value="ECO:0007669"/>
    <property type="project" value="UniProtKB-UniRule"/>
</dbReference>
<dbReference type="GO" id="GO:0006227">
    <property type="term" value="P:dUDP biosynthetic process"/>
    <property type="evidence" value="ECO:0007669"/>
    <property type="project" value="TreeGrafter"/>
</dbReference>
<dbReference type="CDD" id="cd01672">
    <property type="entry name" value="TMPK"/>
    <property type="match status" value="1"/>
</dbReference>
<dbReference type="FunFam" id="3.40.50.300:FF:000225">
    <property type="entry name" value="Thymidylate kinase"/>
    <property type="match status" value="1"/>
</dbReference>
<dbReference type="Gene3D" id="3.40.50.300">
    <property type="entry name" value="P-loop containing nucleotide triphosphate hydrolases"/>
    <property type="match status" value="1"/>
</dbReference>
<dbReference type="HAMAP" id="MF_00165">
    <property type="entry name" value="Thymidylate_kinase"/>
    <property type="match status" value="1"/>
</dbReference>
<dbReference type="InterPro" id="IPR027417">
    <property type="entry name" value="P-loop_NTPase"/>
</dbReference>
<dbReference type="InterPro" id="IPR039430">
    <property type="entry name" value="Thymidylate_kin-like_dom"/>
</dbReference>
<dbReference type="InterPro" id="IPR018095">
    <property type="entry name" value="Thymidylate_kin_CS"/>
</dbReference>
<dbReference type="InterPro" id="IPR018094">
    <property type="entry name" value="Thymidylate_kinase"/>
</dbReference>
<dbReference type="NCBIfam" id="TIGR00041">
    <property type="entry name" value="DTMP_kinase"/>
    <property type="match status" value="1"/>
</dbReference>
<dbReference type="PANTHER" id="PTHR10344">
    <property type="entry name" value="THYMIDYLATE KINASE"/>
    <property type="match status" value="1"/>
</dbReference>
<dbReference type="PANTHER" id="PTHR10344:SF4">
    <property type="entry name" value="UMP-CMP KINASE 2, MITOCHONDRIAL"/>
    <property type="match status" value="1"/>
</dbReference>
<dbReference type="Pfam" id="PF02223">
    <property type="entry name" value="Thymidylate_kin"/>
    <property type="match status" value="1"/>
</dbReference>
<dbReference type="SUPFAM" id="SSF52540">
    <property type="entry name" value="P-loop containing nucleoside triphosphate hydrolases"/>
    <property type="match status" value="1"/>
</dbReference>
<dbReference type="PROSITE" id="PS01331">
    <property type="entry name" value="THYMIDYLATE_KINASE"/>
    <property type="match status" value="1"/>
</dbReference>
<reference key="1">
    <citation type="journal article" date="2000" name="Nature">
        <title>Genome sequence of the endocellular bacterial symbiont of aphids Buchnera sp. APS.</title>
        <authorList>
            <person name="Shigenobu S."/>
            <person name="Watanabe H."/>
            <person name="Hattori M."/>
            <person name="Sakaki Y."/>
            <person name="Ishikawa H."/>
        </authorList>
    </citation>
    <scope>NUCLEOTIDE SEQUENCE [LARGE SCALE GENOMIC DNA]</scope>
    <source>
        <strain>APS</strain>
    </source>
</reference>
<gene>
    <name type="primary">tmk</name>
    <name type="ordered locus">BU353</name>
</gene>
<keyword id="KW-0067">ATP-binding</keyword>
<keyword id="KW-0418">Kinase</keyword>
<keyword id="KW-0545">Nucleotide biosynthesis</keyword>
<keyword id="KW-0547">Nucleotide-binding</keyword>
<keyword id="KW-1185">Reference proteome</keyword>
<keyword id="KW-0808">Transferase</keyword>
<comment type="function">
    <text evidence="1">Phosphorylation of dTMP to form dTDP in both de novo and salvage pathways of dTTP synthesis.</text>
</comment>
<comment type="catalytic activity">
    <reaction>
        <text>dTMP + ATP = dTDP + ADP</text>
        <dbReference type="Rhea" id="RHEA:13517"/>
        <dbReference type="ChEBI" id="CHEBI:30616"/>
        <dbReference type="ChEBI" id="CHEBI:58369"/>
        <dbReference type="ChEBI" id="CHEBI:63528"/>
        <dbReference type="ChEBI" id="CHEBI:456216"/>
        <dbReference type="EC" id="2.7.4.9"/>
    </reaction>
</comment>
<comment type="similarity">
    <text evidence="3">Belongs to the thymidylate kinase family.</text>
</comment>
<evidence type="ECO:0000250" key="1"/>
<evidence type="ECO:0000255" key="2"/>
<evidence type="ECO:0000305" key="3"/>
<sequence>MIKSKFIVIEGLEGAGKTNACICIKNLLKKNSIKNVLLVRQPGSTPIAEDIRRLIKKKFNDDNLIKETELLLMYAARIQLVEKKIKPALKNGIWVISDRHDLSSLAYQGGGLGIPKKIIYQLQSLFLNNFIPDLTIYLDVSPEIGLARALKRNPLDLIESRSLFFFKKTRRCYLEKSKLDKKTIIINANLNIKKVTQNITKKMLNWLNKQVI</sequence>
<protein>
    <recommendedName>
        <fullName>Thymidylate kinase</fullName>
        <ecNumber>2.7.4.9</ecNumber>
    </recommendedName>
    <alternativeName>
        <fullName>dTMP kinase</fullName>
    </alternativeName>
</protein>